<proteinExistence type="inferred from homology"/>
<name>Y717_SHESA</name>
<keyword id="KW-0223">Dioxygenase</keyword>
<keyword id="KW-0408">Iron</keyword>
<keyword id="KW-0479">Metal-binding</keyword>
<keyword id="KW-0560">Oxidoreductase</keyword>
<keyword id="KW-0847">Vitamin C</keyword>
<dbReference type="EC" id="1.14.11.-" evidence="1"/>
<dbReference type="EMBL" id="CP000469">
    <property type="protein sequence ID" value="ABK46955.1"/>
    <property type="molecule type" value="Genomic_DNA"/>
</dbReference>
<dbReference type="RefSeq" id="WP_011715881.1">
    <property type="nucleotide sequence ID" value="NC_008577.1"/>
</dbReference>
<dbReference type="SMR" id="A0KT36"/>
<dbReference type="STRING" id="94122.Shewana3_0717"/>
<dbReference type="KEGG" id="shn:Shewana3_0717"/>
<dbReference type="eggNOG" id="COG3128">
    <property type="taxonomic scope" value="Bacteria"/>
</dbReference>
<dbReference type="HOGENOM" id="CLU_106663_0_0_6"/>
<dbReference type="OrthoDB" id="9812472at2"/>
<dbReference type="Proteomes" id="UP000002589">
    <property type="component" value="Chromosome"/>
</dbReference>
<dbReference type="GO" id="GO:0016706">
    <property type="term" value="F:2-oxoglutarate-dependent dioxygenase activity"/>
    <property type="evidence" value="ECO:0007669"/>
    <property type="project" value="UniProtKB-UniRule"/>
</dbReference>
<dbReference type="GO" id="GO:0005506">
    <property type="term" value="F:iron ion binding"/>
    <property type="evidence" value="ECO:0007669"/>
    <property type="project" value="UniProtKB-UniRule"/>
</dbReference>
<dbReference type="GO" id="GO:0031418">
    <property type="term" value="F:L-ascorbic acid binding"/>
    <property type="evidence" value="ECO:0007669"/>
    <property type="project" value="UniProtKB-KW"/>
</dbReference>
<dbReference type="GO" id="GO:0006974">
    <property type="term" value="P:DNA damage response"/>
    <property type="evidence" value="ECO:0007669"/>
    <property type="project" value="TreeGrafter"/>
</dbReference>
<dbReference type="GO" id="GO:0006879">
    <property type="term" value="P:intracellular iron ion homeostasis"/>
    <property type="evidence" value="ECO:0007669"/>
    <property type="project" value="TreeGrafter"/>
</dbReference>
<dbReference type="FunFam" id="2.60.120.620:FF:000006">
    <property type="entry name" value="PKHD-type hydroxylase YbiX"/>
    <property type="match status" value="1"/>
</dbReference>
<dbReference type="Gene3D" id="2.60.120.620">
    <property type="entry name" value="q2cbj1_9rhob like domain"/>
    <property type="match status" value="1"/>
</dbReference>
<dbReference type="Gene3D" id="4.10.860.20">
    <property type="entry name" value="Rabenosyn, Rab binding domain"/>
    <property type="match status" value="1"/>
</dbReference>
<dbReference type="HAMAP" id="MF_00657">
    <property type="entry name" value="Hydroxyl_YbiX"/>
    <property type="match status" value="1"/>
</dbReference>
<dbReference type="InterPro" id="IPR005123">
    <property type="entry name" value="Oxoglu/Fe-dep_dioxygenase_dom"/>
</dbReference>
<dbReference type="InterPro" id="IPR041097">
    <property type="entry name" value="PKHD_C"/>
</dbReference>
<dbReference type="InterPro" id="IPR023550">
    <property type="entry name" value="PKHD_hydroxylase"/>
</dbReference>
<dbReference type="InterPro" id="IPR006620">
    <property type="entry name" value="Pro_4_hyd_alph"/>
</dbReference>
<dbReference type="InterPro" id="IPR044862">
    <property type="entry name" value="Pro_4_hyd_alph_FE2OG_OXY"/>
</dbReference>
<dbReference type="NCBIfam" id="NF003974">
    <property type="entry name" value="PRK05467.1-3"/>
    <property type="match status" value="1"/>
</dbReference>
<dbReference type="NCBIfam" id="NF003975">
    <property type="entry name" value="PRK05467.1-4"/>
    <property type="match status" value="1"/>
</dbReference>
<dbReference type="PANTHER" id="PTHR41536">
    <property type="entry name" value="PKHD-TYPE HYDROXYLASE YBIX"/>
    <property type="match status" value="1"/>
</dbReference>
<dbReference type="PANTHER" id="PTHR41536:SF1">
    <property type="entry name" value="PKHD-TYPE HYDROXYLASE YBIX"/>
    <property type="match status" value="1"/>
</dbReference>
<dbReference type="Pfam" id="PF13640">
    <property type="entry name" value="2OG-FeII_Oxy_3"/>
    <property type="match status" value="1"/>
</dbReference>
<dbReference type="Pfam" id="PF18331">
    <property type="entry name" value="PKHD_C"/>
    <property type="match status" value="1"/>
</dbReference>
<dbReference type="SMART" id="SM00702">
    <property type="entry name" value="P4Hc"/>
    <property type="match status" value="1"/>
</dbReference>
<dbReference type="SUPFAM" id="SSF51197">
    <property type="entry name" value="Clavaminate synthase-like"/>
    <property type="match status" value="1"/>
</dbReference>
<dbReference type="PROSITE" id="PS51471">
    <property type="entry name" value="FE2OG_OXY"/>
    <property type="match status" value="1"/>
</dbReference>
<feature type="chain" id="PRO_1000061740" description="PKHD-type hydroxylase Shewana3_0717">
    <location>
        <begin position="1"/>
        <end position="224"/>
    </location>
</feature>
<feature type="domain" description="Fe2OG dioxygenase" evidence="1">
    <location>
        <begin position="78"/>
        <end position="176"/>
    </location>
</feature>
<feature type="binding site" evidence="1">
    <location>
        <position position="96"/>
    </location>
    <ligand>
        <name>Fe cation</name>
        <dbReference type="ChEBI" id="CHEBI:24875"/>
    </ligand>
</feature>
<feature type="binding site" evidence="1">
    <location>
        <position position="98"/>
    </location>
    <ligand>
        <name>Fe cation</name>
        <dbReference type="ChEBI" id="CHEBI:24875"/>
    </ligand>
</feature>
<feature type="binding site" evidence="1">
    <location>
        <position position="157"/>
    </location>
    <ligand>
        <name>Fe cation</name>
        <dbReference type="ChEBI" id="CHEBI:24875"/>
    </ligand>
</feature>
<feature type="binding site" evidence="1">
    <location>
        <position position="167"/>
    </location>
    <ligand>
        <name>2-oxoglutarate</name>
        <dbReference type="ChEBI" id="CHEBI:16810"/>
    </ligand>
</feature>
<protein>
    <recommendedName>
        <fullName evidence="1">PKHD-type hydroxylase Shewana3_0717</fullName>
        <ecNumber evidence="1">1.14.11.-</ecNumber>
    </recommendedName>
</protein>
<evidence type="ECO:0000255" key="1">
    <source>
        <dbReference type="HAMAP-Rule" id="MF_00657"/>
    </source>
</evidence>
<sequence length="224" mass="25248">MLIEIPNVFSKEEVNQLREQLDARTWIDGNQTSGVMASTRKRNQQLDKDDPVALQIGELIMARLLAHPLFVSAALPLQFYPPLFNRYQGGETFGYHIDNAIRSTSEGMVRTDLSATLFLSEPDTYQGGELVIQDTYGQQSIKLAAGSLVLYPSTSLHQVTPVTSGERTAAFMWLQSMVRDEGQRRLLFQLDQSIQSLTAQAAPEQELFNLTGVYHNLLRRWSEL</sequence>
<reference key="1">
    <citation type="submission" date="2006-09" db="EMBL/GenBank/DDBJ databases">
        <title>Complete sequence of chromosome 1 of Shewanella sp. ANA-3.</title>
        <authorList>
            <person name="Copeland A."/>
            <person name="Lucas S."/>
            <person name="Lapidus A."/>
            <person name="Barry K."/>
            <person name="Detter J.C."/>
            <person name="Glavina del Rio T."/>
            <person name="Hammon N."/>
            <person name="Israni S."/>
            <person name="Dalin E."/>
            <person name="Tice H."/>
            <person name="Pitluck S."/>
            <person name="Chertkov O."/>
            <person name="Brettin T."/>
            <person name="Bruce D."/>
            <person name="Han C."/>
            <person name="Tapia R."/>
            <person name="Gilna P."/>
            <person name="Schmutz J."/>
            <person name="Larimer F."/>
            <person name="Land M."/>
            <person name="Hauser L."/>
            <person name="Kyrpides N."/>
            <person name="Kim E."/>
            <person name="Newman D."/>
            <person name="Salticov C."/>
            <person name="Konstantinidis K."/>
            <person name="Klappenback J."/>
            <person name="Tiedje J."/>
            <person name="Richardson P."/>
        </authorList>
    </citation>
    <scope>NUCLEOTIDE SEQUENCE [LARGE SCALE GENOMIC DNA]</scope>
    <source>
        <strain>ANA-3</strain>
    </source>
</reference>
<accession>A0KT36</accession>
<comment type="cofactor">
    <cofactor evidence="1">
        <name>Fe(2+)</name>
        <dbReference type="ChEBI" id="CHEBI:29033"/>
    </cofactor>
    <text evidence="1">Binds 1 Fe(2+) ion per subunit.</text>
</comment>
<comment type="cofactor">
    <cofactor evidence="1">
        <name>L-ascorbate</name>
        <dbReference type="ChEBI" id="CHEBI:38290"/>
    </cofactor>
</comment>
<gene>
    <name type="ordered locus">Shewana3_0717</name>
</gene>
<organism>
    <name type="scientific">Shewanella sp. (strain ANA-3)</name>
    <dbReference type="NCBI Taxonomy" id="94122"/>
    <lineage>
        <taxon>Bacteria</taxon>
        <taxon>Pseudomonadati</taxon>
        <taxon>Pseudomonadota</taxon>
        <taxon>Gammaproteobacteria</taxon>
        <taxon>Alteromonadales</taxon>
        <taxon>Shewanellaceae</taxon>
        <taxon>Shewanella</taxon>
    </lineage>
</organism>